<keyword id="KW-0496">Mitochondrion</keyword>
<keyword id="KW-1185">Reference proteome</keyword>
<keyword id="KW-0677">Repeat</keyword>
<keyword id="KW-0809">Transit peptide</keyword>
<organism>
    <name type="scientific">Arabidopsis thaliana</name>
    <name type="common">Mouse-ear cress</name>
    <dbReference type="NCBI Taxonomy" id="3702"/>
    <lineage>
        <taxon>Eukaryota</taxon>
        <taxon>Viridiplantae</taxon>
        <taxon>Streptophyta</taxon>
        <taxon>Embryophyta</taxon>
        <taxon>Tracheophyta</taxon>
        <taxon>Spermatophyta</taxon>
        <taxon>Magnoliopsida</taxon>
        <taxon>eudicotyledons</taxon>
        <taxon>Gunneridae</taxon>
        <taxon>Pentapetalae</taxon>
        <taxon>rosids</taxon>
        <taxon>malvids</taxon>
        <taxon>Brassicales</taxon>
        <taxon>Brassicaceae</taxon>
        <taxon>Camelineae</taxon>
        <taxon>Arabidopsis</taxon>
    </lineage>
</organism>
<proteinExistence type="evidence at transcript level"/>
<sequence>MILRRLVLSATSNSNPRRSQSLSSSGVRILSSSSSDRYTSSSQRYSGDDRLARLRHKDWLAPNEVLKIFDNVKDPSFLLPAYQHYSKRKDYQPTESLYALMINKFGQAKMYDEIEEVMRTIKLEKRCRFSEEFFYNLMRIYGNLAGRINRAIEILFGMPDFGCWPSSKSFNFILNLLVSAKLFDEIHKIFVSAPKLGVEIDACCLNILIKGLCESGNLEAALQLLDEFPQQKSRPNVMTFSPLIRGFCNKGKFEEAFKLLERMEKERIEPDTITFNILISGLRKKGRVEEGIDLLERMKVKGCEPNPGTYQEVLYGLLDKKRNLEAKEMMSQMISWGMRPSFLSYKKMVLGLCETKSVVEMDWVLRQMVNHGFVPKTLMWWKVVQCVVSKNNDDSQANLDRITAC</sequence>
<evidence type="ECO:0000255" key="1"/>
<evidence type="ECO:0000256" key="2">
    <source>
        <dbReference type="SAM" id="MobiDB-lite"/>
    </source>
</evidence>
<evidence type="ECO:0000305" key="3"/>
<reference key="1">
    <citation type="journal article" date="2000" name="DNA Res.">
        <title>Structural analysis of Arabidopsis thaliana chromosome 3. I. Sequence features of the regions of 4,504,864 bp covered by sixty P1 and TAC clones.</title>
        <authorList>
            <person name="Sato S."/>
            <person name="Nakamura Y."/>
            <person name="Kaneko T."/>
            <person name="Katoh T."/>
            <person name="Asamizu E."/>
            <person name="Tabata S."/>
        </authorList>
    </citation>
    <scope>NUCLEOTIDE SEQUENCE [LARGE SCALE GENOMIC DNA]</scope>
    <source>
        <strain>cv. Columbia</strain>
    </source>
</reference>
<reference key="2">
    <citation type="journal article" date="2017" name="Plant J.">
        <title>Araport11: a complete reannotation of the Arabidopsis thaliana reference genome.</title>
        <authorList>
            <person name="Cheng C.Y."/>
            <person name="Krishnakumar V."/>
            <person name="Chan A.P."/>
            <person name="Thibaud-Nissen F."/>
            <person name="Schobel S."/>
            <person name="Town C.D."/>
        </authorList>
    </citation>
    <scope>GENOME REANNOTATION</scope>
    <source>
        <strain>cv. Columbia</strain>
    </source>
</reference>
<reference key="3">
    <citation type="submission" date="2006-12" db="EMBL/GenBank/DDBJ databases">
        <title>Arabidopsis ORF clones.</title>
        <authorList>
            <person name="Bautista V.R."/>
            <person name="Kim C.J."/>
            <person name="Chen H."/>
            <person name="Wu S.Y."/>
            <person name="De Los Reyes C."/>
            <person name="Ecker J.R."/>
        </authorList>
    </citation>
    <scope>NUCLEOTIDE SEQUENCE [LARGE SCALE MRNA]</scope>
    <source>
        <strain>cv. Columbia</strain>
    </source>
</reference>
<reference key="4">
    <citation type="journal article" date="2004" name="Plant Cell">
        <title>Genome-wide analysis of Arabidopsis pentatricopeptide repeat proteins reveals their essential role in organelle biogenesis.</title>
        <authorList>
            <person name="Lurin C."/>
            <person name="Andres C."/>
            <person name="Aubourg S."/>
            <person name="Bellaoui M."/>
            <person name="Bitton F."/>
            <person name="Bruyere C."/>
            <person name="Caboche M."/>
            <person name="Debast C."/>
            <person name="Gualberto J."/>
            <person name="Hoffmann B."/>
            <person name="Lecharny A."/>
            <person name="Le Ret M."/>
            <person name="Martin-Magniette M.-L."/>
            <person name="Mireau H."/>
            <person name="Peeters N."/>
            <person name="Renou J.-P."/>
            <person name="Szurek B."/>
            <person name="Taconnat L."/>
            <person name="Small I."/>
        </authorList>
    </citation>
    <scope>GENE FAMILY</scope>
</reference>
<protein>
    <recommendedName>
        <fullName>Pentatricopeptide repeat-containing protein At3g14580, mitochondrial</fullName>
    </recommendedName>
</protein>
<accession>Q9LUD6</accession>
<dbReference type="EMBL" id="AB023038">
    <property type="protein sequence ID" value="BAB02390.1"/>
    <property type="molecule type" value="Genomic_DNA"/>
</dbReference>
<dbReference type="EMBL" id="CP002686">
    <property type="protein sequence ID" value="AEE75541.1"/>
    <property type="molecule type" value="Genomic_DNA"/>
</dbReference>
<dbReference type="EMBL" id="BT029779">
    <property type="protein sequence ID" value="ABM06049.1"/>
    <property type="molecule type" value="mRNA"/>
</dbReference>
<dbReference type="RefSeq" id="NP_188076.1">
    <property type="nucleotide sequence ID" value="NM_112318.2"/>
</dbReference>
<dbReference type="SMR" id="Q9LUD6"/>
<dbReference type="BioGRID" id="6018">
    <property type="interactions" value="2"/>
</dbReference>
<dbReference type="FunCoup" id="Q9LUD6">
    <property type="interactions" value="33"/>
</dbReference>
<dbReference type="PaxDb" id="3702-AT3G14580.1"/>
<dbReference type="ProteomicsDB" id="249177"/>
<dbReference type="EnsemblPlants" id="AT3G14580.1">
    <property type="protein sequence ID" value="AT3G14580.1"/>
    <property type="gene ID" value="AT3G14580"/>
</dbReference>
<dbReference type="GeneID" id="820684"/>
<dbReference type="Gramene" id="AT3G14580.1">
    <property type="protein sequence ID" value="AT3G14580.1"/>
    <property type="gene ID" value="AT3G14580"/>
</dbReference>
<dbReference type="KEGG" id="ath:AT3G14580"/>
<dbReference type="Araport" id="AT3G14580"/>
<dbReference type="TAIR" id="AT3G14580"/>
<dbReference type="eggNOG" id="KOG4197">
    <property type="taxonomic scope" value="Eukaryota"/>
</dbReference>
<dbReference type="HOGENOM" id="CLU_768571_0_0_1"/>
<dbReference type="InParanoid" id="Q9LUD6"/>
<dbReference type="OMA" id="QGFVPKM"/>
<dbReference type="PhylomeDB" id="Q9LUD6"/>
<dbReference type="PRO" id="PR:Q9LUD6"/>
<dbReference type="Proteomes" id="UP000006548">
    <property type="component" value="Chromosome 3"/>
</dbReference>
<dbReference type="ExpressionAtlas" id="Q9LUD6">
    <property type="expression patterns" value="baseline and differential"/>
</dbReference>
<dbReference type="GO" id="GO:0005739">
    <property type="term" value="C:mitochondrion"/>
    <property type="evidence" value="ECO:0007669"/>
    <property type="project" value="UniProtKB-SubCell"/>
</dbReference>
<dbReference type="Gene3D" id="1.25.40.10">
    <property type="entry name" value="Tetratricopeptide repeat domain"/>
    <property type="match status" value="3"/>
</dbReference>
<dbReference type="InterPro" id="IPR002885">
    <property type="entry name" value="Pentatricopeptide_rpt"/>
</dbReference>
<dbReference type="InterPro" id="IPR050872">
    <property type="entry name" value="PPR_P_subfamily"/>
</dbReference>
<dbReference type="InterPro" id="IPR011990">
    <property type="entry name" value="TPR-like_helical_dom_sf"/>
</dbReference>
<dbReference type="NCBIfam" id="TIGR00756">
    <property type="entry name" value="PPR"/>
    <property type="match status" value="3"/>
</dbReference>
<dbReference type="PANTHER" id="PTHR46128">
    <property type="entry name" value="MITOCHONDRIAL GROUP I INTRON SPLICING FACTOR CCM1"/>
    <property type="match status" value="1"/>
</dbReference>
<dbReference type="PANTHER" id="PTHR46128:SF211">
    <property type="entry name" value="PENTACOTRIPEPTIDE-REPEAT REGION OF PRORP DOMAIN-CONTAINING PROTEIN"/>
    <property type="match status" value="1"/>
</dbReference>
<dbReference type="Pfam" id="PF12854">
    <property type="entry name" value="PPR_1"/>
    <property type="match status" value="1"/>
</dbReference>
<dbReference type="Pfam" id="PF13041">
    <property type="entry name" value="PPR_2"/>
    <property type="match status" value="1"/>
</dbReference>
<dbReference type="PROSITE" id="PS51375">
    <property type="entry name" value="PPR"/>
    <property type="match status" value="8"/>
</dbReference>
<name>PP230_ARATH</name>
<feature type="transit peptide" description="Mitochondrion" evidence="1">
    <location>
        <begin position="1"/>
        <end position="37"/>
    </location>
</feature>
<feature type="chain" id="PRO_0000356089" description="Pentatricopeptide repeat-containing protein At3g14580, mitochondrial">
    <location>
        <begin position="38"/>
        <end position="405"/>
    </location>
</feature>
<feature type="repeat" description="PPR 1">
    <location>
        <begin position="94"/>
        <end position="124"/>
    </location>
</feature>
<feature type="repeat" description="PPR 2">
    <location>
        <begin position="130"/>
        <end position="165"/>
    </location>
</feature>
<feature type="repeat" description="PPR 3">
    <location>
        <begin position="166"/>
        <end position="200"/>
    </location>
</feature>
<feature type="repeat" description="PPR 4">
    <location>
        <begin position="201"/>
        <end position="235"/>
    </location>
</feature>
<feature type="repeat" description="PPR 5">
    <location>
        <begin position="236"/>
        <end position="270"/>
    </location>
</feature>
<feature type="repeat" description="PPR 6">
    <location>
        <begin position="271"/>
        <end position="305"/>
    </location>
</feature>
<feature type="repeat" description="PPR 7">
    <location>
        <begin position="306"/>
        <end position="340"/>
    </location>
</feature>
<feature type="repeat" description="PPR 8">
    <location>
        <begin position="341"/>
        <end position="375"/>
    </location>
</feature>
<feature type="region of interest" description="Disordered" evidence="2">
    <location>
        <begin position="13"/>
        <end position="44"/>
    </location>
</feature>
<comment type="subcellular location">
    <subcellularLocation>
        <location evidence="3">Mitochondrion</location>
    </subcellularLocation>
</comment>
<comment type="similarity">
    <text evidence="3">Belongs to the PPR family. P subfamily.</text>
</comment>
<comment type="online information" name="Pentatricopeptide repeat proteins">
    <link uri="https://ppr.plantenergy.uwa.edu.au"/>
</comment>
<gene>
    <name type="ordered locus">At3g14580</name>
    <name type="ORF">MIE1.8</name>
</gene>